<organism>
    <name type="scientific">Actinobacillus succinogenes (strain ATCC 55618 / DSM 22257 / CCUG 43843 / 130Z)</name>
    <dbReference type="NCBI Taxonomy" id="339671"/>
    <lineage>
        <taxon>Bacteria</taxon>
        <taxon>Pseudomonadati</taxon>
        <taxon>Pseudomonadota</taxon>
        <taxon>Gammaproteobacteria</taxon>
        <taxon>Pasteurellales</taxon>
        <taxon>Pasteurellaceae</taxon>
        <taxon>Actinobacillus</taxon>
    </lineage>
</organism>
<accession>A6VPH7</accession>
<name>HYPA_ACTSZ</name>
<keyword id="KW-0479">Metal-binding</keyword>
<keyword id="KW-0533">Nickel</keyword>
<keyword id="KW-1185">Reference proteome</keyword>
<keyword id="KW-0862">Zinc</keyword>
<gene>
    <name evidence="1" type="primary">hypA</name>
    <name type="ordered locus">Asuc_1516</name>
</gene>
<sequence>MHEMALTQNIIEIVEEQCRRNHVNKVTDIWLEIGPLSCVEPDAITFCFDVYSKDTVMENCKIHFIPVPALAYCWHCEKTVKIKTHHDACPECGGVHLQKQGGDELRIKEIAVE</sequence>
<feature type="chain" id="PRO_1000071748" description="Hydrogenase maturation factor HypA">
    <location>
        <begin position="1"/>
        <end position="113"/>
    </location>
</feature>
<feature type="binding site" evidence="1">
    <location>
        <position position="2"/>
    </location>
    <ligand>
        <name>Ni(2+)</name>
        <dbReference type="ChEBI" id="CHEBI:49786"/>
    </ligand>
</feature>
<feature type="binding site" evidence="1">
    <location>
        <position position="73"/>
    </location>
    <ligand>
        <name>Zn(2+)</name>
        <dbReference type="ChEBI" id="CHEBI:29105"/>
    </ligand>
</feature>
<feature type="binding site" evidence="1">
    <location>
        <position position="76"/>
    </location>
    <ligand>
        <name>Zn(2+)</name>
        <dbReference type="ChEBI" id="CHEBI:29105"/>
    </ligand>
</feature>
<feature type="binding site" evidence="1">
    <location>
        <position position="89"/>
    </location>
    <ligand>
        <name>Zn(2+)</name>
        <dbReference type="ChEBI" id="CHEBI:29105"/>
    </ligand>
</feature>
<feature type="binding site" evidence="1">
    <location>
        <position position="92"/>
    </location>
    <ligand>
        <name>Zn(2+)</name>
        <dbReference type="ChEBI" id="CHEBI:29105"/>
    </ligand>
</feature>
<evidence type="ECO:0000255" key="1">
    <source>
        <dbReference type="HAMAP-Rule" id="MF_00213"/>
    </source>
</evidence>
<proteinExistence type="inferred from homology"/>
<reference key="1">
    <citation type="journal article" date="2010" name="BMC Genomics">
        <title>A genomic perspective on the potential of Actinobacillus succinogenes for industrial succinate production.</title>
        <authorList>
            <person name="McKinlay J.B."/>
            <person name="Laivenieks M."/>
            <person name="Schindler B.D."/>
            <person name="McKinlay A.A."/>
            <person name="Siddaramappa S."/>
            <person name="Challacombe J.F."/>
            <person name="Lowry S.R."/>
            <person name="Clum A."/>
            <person name="Lapidus A.L."/>
            <person name="Burkhart K.B."/>
            <person name="Harkins V."/>
            <person name="Vieille C."/>
        </authorList>
    </citation>
    <scope>NUCLEOTIDE SEQUENCE [LARGE SCALE GENOMIC DNA]</scope>
    <source>
        <strain>ATCC 55618 / DSM 22257 / CCUG 43843 / 130Z</strain>
    </source>
</reference>
<comment type="function">
    <text evidence="1">Involved in the maturation of [NiFe] hydrogenases. Required for nickel insertion into the metal center of the hydrogenase.</text>
</comment>
<comment type="similarity">
    <text evidence="1">Belongs to the HypA/HybF family.</text>
</comment>
<protein>
    <recommendedName>
        <fullName evidence="1">Hydrogenase maturation factor HypA</fullName>
    </recommendedName>
</protein>
<dbReference type="EMBL" id="CP000746">
    <property type="protein sequence ID" value="ABR74874.1"/>
    <property type="molecule type" value="Genomic_DNA"/>
</dbReference>
<dbReference type="RefSeq" id="WP_012073251.1">
    <property type="nucleotide sequence ID" value="NC_009655.1"/>
</dbReference>
<dbReference type="SMR" id="A6VPH7"/>
<dbReference type="STRING" id="339671.Asuc_1516"/>
<dbReference type="KEGG" id="asu:Asuc_1516"/>
<dbReference type="eggNOG" id="COG0375">
    <property type="taxonomic scope" value="Bacteria"/>
</dbReference>
<dbReference type="HOGENOM" id="CLU_126929_0_0_6"/>
<dbReference type="OrthoDB" id="288014at2"/>
<dbReference type="Proteomes" id="UP000001114">
    <property type="component" value="Chromosome"/>
</dbReference>
<dbReference type="GO" id="GO:0016151">
    <property type="term" value="F:nickel cation binding"/>
    <property type="evidence" value="ECO:0007669"/>
    <property type="project" value="UniProtKB-UniRule"/>
</dbReference>
<dbReference type="GO" id="GO:0008270">
    <property type="term" value="F:zinc ion binding"/>
    <property type="evidence" value="ECO:0007669"/>
    <property type="project" value="UniProtKB-UniRule"/>
</dbReference>
<dbReference type="GO" id="GO:0051604">
    <property type="term" value="P:protein maturation"/>
    <property type="evidence" value="ECO:0007669"/>
    <property type="project" value="InterPro"/>
</dbReference>
<dbReference type="GO" id="GO:0036211">
    <property type="term" value="P:protein modification process"/>
    <property type="evidence" value="ECO:0007669"/>
    <property type="project" value="UniProtKB-UniRule"/>
</dbReference>
<dbReference type="FunFam" id="3.30.2320.80:FF:000001">
    <property type="entry name" value="Hydrogenase maturation factor HypA"/>
    <property type="match status" value="1"/>
</dbReference>
<dbReference type="Gene3D" id="3.30.2320.80">
    <property type="match status" value="1"/>
</dbReference>
<dbReference type="HAMAP" id="MF_00213">
    <property type="entry name" value="HypA_HybF"/>
    <property type="match status" value="1"/>
</dbReference>
<dbReference type="InterPro" id="IPR020538">
    <property type="entry name" value="Hydgase_Ni_incorp_HypA/HybF_CS"/>
</dbReference>
<dbReference type="InterPro" id="IPR000688">
    <property type="entry name" value="HypA/HybF"/>
</dbReference>
<dbReference type="NCBIfam" id="TIGR00100">
    <property type="entry name" value="hypA"/>
    <property type="match status" value="1"/>
</dbReference>
<dbReference type="NCBIfam" id="NF009046">
    <property type="entry name" value="PRK12380.1"/>
    <property type="match status" value="1"/>
</dbReference>
<dbReference type="PANTHER" id="PTHR34535">
    <property type="entry name" value="HYDROGENASE MATURATION FACTOR HYPA"/>
    <property type="match status" value="1"/>
</dbReference>
<dbReference type="PANTHER" id="PTHR34535:SF3">
    <property type="entry name" value="HYDROGENASE MATURATION FACTOR HYPA"/>
    <property type="match status" value="1"/>
</dbReference>
<dbReference type="Pfam" id="PF01155">
    <property type="entry name" value="HypA"/>
    <property type="match status" value="1"/>
</dbReference>
<dbReference type="PIRSF" id="PIRSF004761">
    <property type="entry name" value="Hydrgn_mat_HypA"/>
    <property type="match status" value="1"/>
</dbReference>
<dbReference type="PROSITE" id="PS01249">
    <property type="entry name" value="HYPA"/>
    <property type="match status" value="1"/>
</dbReference>